<organism>
    <name type="scientific">Geobacter metallireducens (strain ATCC 53774 / DSM 7210 / GS-15)</name>
    <dbReference type="NCBI Taxonomy" id="269799"/>
    <lineage>
        <taxon>Bacteria</taxon>
        <taxon>Pseudomonadati</taxon>
        <taxon>Thermodesulfobacteriota</taxon>
        <taxon>Desulfuromonadia</taxon>
        <taxon>Geobacterales</taxon>
        <taxon>Geobacteraceae</taxon>
        <taxon>Geobacter</taxon>
    </lineage>
</organism>
<sequence length="433" mass="48639">MTSTVESLSSVKKKISFEIPAERVSAEIEKVFGQIQKRAAIKGFRKGKVPRSLVEQNYRSMMESDVLKNLFDETYFKALADHKIFPVSHPHIESDEVKRGEALKYSATVEVFPEIDVKDYKGLEVKRERFVSDVAPVEARLNEMREGMAELKPLEEGKCAETGNFVVIDFVGSVDGIPFEGGAAESYQLELGSGRFIPGFEDQLVGVKAGEQRTVEVTFPEEYGNKDLAGKAASFAVTVKEAKVKELPELDDEFAMQFGEFETLEQLKTKLAELHKDQETARIKADVQDRIVKALIGNNEIEVPSTLVERQLQMMLSNMKNRLAQQRLSLEMMGMDDESFKTHYRDSAESQVKGSLLLEAVAKKEGITVNDPDVEAKLRAMAEEAGQDFDRVKDFYEQNHNAKENLVAHLNEEKVLGYLLENAVVTEVAKDEL</sequence>
<dbReference type="EC" id="5.2.1.8" evidence="1"/>
<dbReference type="EMBL" id="CP000148">
    <property type="protein sequence ID" value="ABB32103.1"/>
    <property type="molecule type" value="Genomic_DNA"/>
</dbReference>
<dbReference type="RefSeq" id="WP_004511971.1">
    <property type="nucleotide sequence ID" value="NC_007517.1"/>
</dbReference>
<dbReference type="SMR" id="Q39UH1"/>
<dbReference type="STRING" id="269799.Gmet_1874"/>
<dbReference type="KEGG" id="gme:Gmet_1874"/>
<dbReference type="eggNOG" id="COG0544">
    <property type="taxonomic scope" value="Bacteria"/>
</dbReference>
<dbReference type="HOGENOM" id="CLU_033058_3_2_7"/>
<dbReference type="Proteomes" id="UP000007073">
    <property type="component" value="Chromosome"/>
</dbReference>
<dbReference type="GO" id="GO:0005737">
    <property type="term" value="C:cytoplasm"/>
    <property type="evidence" value="ECO:0007669"/>
    <property type="project" value="UniProtKB-SubCell"/>
</dbReference>
<dbReference type="GO" id="GO:0003755">
    <property type="term" value="F:peptidyl-prolyl cis-trans isomerase activity"/>
    <property type="evidence" value="ECO:0007669"/>
    <property type="project" value="UniProtKB-UniRule"/>
</dbReference>
<dbReference type="GO" id="GO:0044183">
    <property type="term" value="F:protein folding chaperone"/>
    <property type="evidence" value="ECO:0007669"/>
    <property type="project" value="TreeGrafter"/>
</dbReference>
<dbReference type="GO" id="GO:0043022">
    <property type="term" value="F:ribosome binding"/>
    <property type="evidence" value="ECO:0007669"/>
    <property type="project" value="TreeGrafter"/>
</dbReference>
<dbReference type="GO" id="GO:0051083">
    <property type="term" value="P:'de novo' cotranslational protein folding"/>
    <property type="evidence" value="ECO:0007669"/>
    <property type="project" value="TreeGrafter"/>
</dbReference>
<dbReference type="GO" id="GO:0051301">
    <property type="term" value="P:cell division"/>
    <property type="evidence" value="ECO:0007669"/>
    <property type="project" value="UniProtKB-KW"/>
</dbReference>
<dbReference type="GO" id="GO:0061077">
    <property type="term" value="P:chaperone-mediated protein folding"/>
    <property type="evidence" value="ECO:0007669"/>
    <property type="project" value="TreeGrafter"/>
</dbReference>
<dbReference type="GO" id="GO:0015031">
    <property type="term" value="P:protein transport"/>
    <property type="evidence" value="ECO:0007669"/>
    <property type="project" value="UniProtKB-UniRule"/>
</dbReference>
<dbReference type="GO" id="GO:0043335">
    <property type="term" value="P:protein unfolding"/>
    <property type="evidence" value="ECO:0007669"/>
    <property type="project" value="TreeGrafter"/>
</dbReference>
<dbReference type="FunFam" id="3.10.50.40:FF:000001">
    <property type="entry name" value="Trigger factor"/>
    <property type="match status" value="1"/>
</dbReference>
<dbReference type="Gene3D" id="3.10.50.40">
    <property type="match status" value="1"/>
</dbReference>
<dbReference type="Gene3D" id="3.30.70.1050">
    <property type="entry name" value="Trigger factor ribosome-binding domain"/>
    <property type="match status" value="1"/>
</dbReference>
<dbReference type="Gene3D" id="1.10.3120.10">
    <property type="entry name" value="Trigger factor, C-terminal domain"/>
    <property type="match status" value="1"/>
</dbReference>
<dbReference type="HAMAP" id="MF_00303">
    <property type="entry name" value="Trigger_factor_Tig"/>
    <property type="match status" value="1"/>
</dbReference>
<dbReference type="InterPro" id="IPR046357">
    <property type="entry name" value="PPIase_dom_sf"/>
</dbReference>
<dbReference type="InterPro" id="IPR001179">
    <property type="entry name" value="PPIase_FKBP_dom"/>
</dbReference>
<dbReference type="InterPro" id="IPR005215">
    <property type="entry name" value="Trig_fac"/>
</dbReference>
<dbReference type="InterPro" id="IPR008880">
    <property type="entry name" value="Trigger_fac_C"/>
</dbReference>
<dbReference type="InterPro" id="IPR037041">
    <property type="entry name" value="Trigger_fac_C_sf"/>
</dbReference>
<dbReference type="InterPro" id="IPR008881">
    <property type="entry name" value="Trigger_fac_ribosome-bd_bac"/>
</dbReference>
<dbReference type="InterPro" id="IPR036611">
    <property type="entry name" value="Trigger_fac_ribosome-bd_sf"/>
</dbReference>
<dbReference type="InterPro" id="IPR027304">
    <property type="entry name" value="Trigger_fact/SurA_dom_sf"/>
</dbReference>
<dbReference type="NCBIfam" id="TIGR00115">
    <property type="entry name" value="tig"/>
    <property type="match status" value="1"/>
</dbReference>
<dbReference type="PANTHER" id="PTHR30560">
    <property type="entry name" value="TRIGGER FACTOR CHAPERONE AND PEPTIDYL-PROLYL CIS/TRANS ISOMERASE"/>
    <property type="match status" value="1"/>
</dbReference>
<dbReference type="PANTHER" id="PTHR30560:SF3">
    <property type="entry name" value="TRIGGER FACTOR-LIKE PROTEIN TIG, CHLOROPLASTIC"/>
    <property type="match status" value="1"/>
</dbReference>
<dbReference type="Pfam" id="PF00254">
    <property type="entry name" value="FKBP_C"/>
    <property type="match status" value="1"/>
</dbReference>
<dbReference type="Pfam" id="PF05698">
    <property type="entry name" value="Trigger_C"/>
    <property type="match status" value="1"/>
</dbReference>
<dbReference type="Pfam" id="PF05697">
    <property type="entry name" value="Trigger_N"/>
    <property type="match status" value="1"/>
</dbReference>
<dbReference type="PIRSF" id="PIRSF003095">
    <property type="entry name" value="Trigger_factor"/>
    <property type="match status" value="1"/>
</dbReference>
<dbReference type="SUPFAM" id="SSF54534">
    <property type="entry name" value="FKBP-like"/>
    <property type="match status" value="1"/>
</dbReference>
<dbReference type="SUPFAM" id="SSF109998">
    <property type="entry name" value="Triger factor/SurA peptide-binding domain-like"/>
    <property type="match status" value="1"/>
</dbReference>
<dbReference type="SUPFAM" id="SSF102735">
    <property type="entry name" value="Trigger factor ribosome-binding domain"/>
    <property type="match status" value="1"/>
</dbReference>
<dbReference type="PROSITE" id="PS50059">
    <property type="entry name" value="FKBP_PPIASE"/>
    <property type="match status" value="1"/>
</dbReference>
<reference key="1">
    <citation type="journal article" date="2009" name="BMC Microbiol.">
        <title>The genome sequence of Geobacter metallireducens: features of metabolism, physiology and regulation common and dissimilar to Geobacter sulfurreducens.</title>
        <authorList>
            <person name="Aklujkar M."/>
            <person name="Krushkal J."/>
            <person name="DiBartolo G."/>
            <person name="Lapidus A."/>
            <person name="Land M.L."/>
            <person name="Lovley D.R."/>
        </authorList>
    </citation>
    <scope>NUCLEOTIDE SEQUENCE [LARGE SCALE GENOMIC DNA]</scope>
    <source>
        <strain>ATCC 53774 / DSM 7210 / GS-15</strain>
    </source>
</reference>
<keyword id="KW-0131">Cell cycle</keyword>
<keyword id="KW-0132">Cell division</keyword>
<keyword id="KW-0143">Chaperone</keyword>
<keyword id="KW-0963">Cytoplasm</keyword>
<keyword id="KW-0413">Isomerase</keyword>
<keyword id="KW-1185">Reference proteome</keyword>
<keyword id="KW-0697">Rotamase</keyword>
<proteinExistence type="inferred from homology"/>
<evidence type="ECO:0000255" key="1">
    <source>
        <dbReference type="HAMAP-Rule" id="MF_00303"/>
    </source>
</evidence>
<accession>Q39UH1</accession>
<gene>
    <name evidence="1" type="primary">tig</name>
    <name type="ordered locus">Gmet_1874</name>
</gene>
<name>TIG_GEOMG</name>
<protein>
    <recommendedName>
        <fullName evidence="1">Trigger factor</fullName>
        <shortName evidence="1">TF</shortName>
        <ecNumber evidence="1">5.2.1.8</ecNumber>
    </recommendedName>
    <alternativeName>
        <fullName evidence="1">PPIase</fullName>
    </alternativeName>
</protein>
<feature type="chain" id="PRO_0000256562" description="Trigger factor">
    <location>
        <begin position="1"/>
        <end position="433"/>
    </location>
</feature>
<feature type="domain" description="PPIase FKBP-type" evidence="1">
    <location>
        <begin position="163"/>
        <end position="248"/>
    </location>
</feature>
<comment type="function">
    <text evidence="1">Involved in protein export. Acts as a chaperone by maintaining the newly synthesized protein in an open conformation. Functions as a peptidyl-prolyl cis-trans isomerase.</text>
</comment>
<comment type="catalytic activity">
    <reaction evidence="1">
        <text>[protein]-peptidylproline (omega=180) = [protein]-peptidylproline (omega=0)</text>
        <dbReference type="Rhea" id="RHEA:16237"/>
        <dbReference type="Rhea" id="RHEA-COMP:10747"/>
        <dbReference type="Rhea" id="RHEA-COMP:10748"/>
        <dbReference type="ChEBI" id="CHEBI:83833"/>
        <dbReference type="ChEBI" id="CHEBI:83834"/>
        <dbReference type="EC" id="5.2.1.8"/>
    </reaction>
</comment>
<comment type="subcellular location">
    <subcellularLocation>
        <location>Cytoplasm</location>
    </subcellularLocation>
    <text evidence="1">About half TF is bound to the ribosome near the polypeptide exit tunnel while the other half is free in the cytoplasm.</text>
</comment>
<comment type="domain">
    <text evidence="1">Consists of 3 domains; the N-terminus binds the ribosome, the middle domain has PPIase activity, while the C-terminus has intrinsic chaperone activity on its own.</text>
</comment>
<comment type="similarity">
    <text evidence="1">Belongs to the FKBP-type PPIase family. Tig subfamily.</text>
</comment>